<reference key="1">
    <citation type="submission" date="2007-08" db="EMBL/GenBank/DDBJ databases">
        <title>Complete sequence of Shewanella sediminis HAW-EB3.</title>
        <authorList>
            <consortium name="US DOE Joint Genome Institute"/>
            <person name="Copeland A."/>
            <person name="Lucas S."/>
            <person name="Lapidus A."/>
            <person name="Barry K."/>
            <person name="Glavina del Rio T."/>
            <person name="Dalin E."/>
            <person name="Tice H."/>
            <person name="Pitluck S."/>
            <person name="Chertkov O."/>
            <person name="Brettin T."/>
            <person name="Bruce D."/>
            <person name="Detter J.C."/>
            <person name="Han C."/>
            <person name="Schmutz J."/>
            <person name="Larimer F."/>
            <person name="Land M."/>
            <person name="Hauser L."/>
            <person name="Kyrpides N."/>
            <person name="Kim E."/>
            <person name="Zhao J.-S."/>
            <person name="Richardson P."/>
        </authorList>
    </citation>
    <scope>NUCLEOTIDE SEQUENCE [LARGE SCALE GENOMIC DNA]</scope>
    <source>
        <strain>HAW-EB3</strain>
    </source>
</reference>
<name>RECF_SHESH</name>
<proteinExistence type="inferred from homology"/>
<evidence type="ECO:0000255" key="1">
    <source>
        <dbReference type="HAMAP-Rule" id="MF_00365"/>
    </source>
</evidence>
<dbReference type="EMBL" id="CP000821">
    <property type="protein sequence ID" value="ABV34621.1"/>
    <property type="molecule type" value="Genomic_DNA"/>
</dbReference>
<dbReference type="RefSeq" id="WP_012004147.1">
    <property type="nucleotide sequence ID" value="NC_009831.1"/>
</dbReference>
<dbReference type="SMR" id="A8FP48"/>
<dbReference type="STRING" id="425104.Ssed_0008"/>
<dbReference type="KEGG" id="sse:Ssed_0008"/>
<dbReference type="eggNOG" id="COG1195">
    <property type="taxonomic scope" value="Bacteria"/>
</dbReference>
<dbReference type="HOGENOM" id="CLU_040267_0_0_6"/>
<dbReference type="OrthoDB" id="9803889at2"/>
<dbReference type="Proteomes" id="UP000002015">
    <property type="component" value="Chromosome"/>
</dbReference>
<dbReference type="GO" id="GO:0005737">
    <property type="term" value="C:cytoplasm"/>
    <property type="evidence" value="ECO:0007669"/>
    <property type="project" value="UniProtKB-SubCell"/>
</dbReference>
<dbReference type="GO" id="GO:0005524">
    <property type="term" value="F:ATP binding"/>
    <property type="evidence" value="ECO:0007669"/>
    <property type="project" value="UniProtKB-UniRule"/>
</dbReference>
<dbReference type="GO" id="GO:0003697">
    <property type="term" value="F:single-stranded DNA binding"/>
    <property type="evidence" value="ECO:0007669"/>
    <property type="project" value="UniProtKB-UniRule"/>
</dbReference>
<dbReference type="GO" id="GO:0006260">
    <property type="term" value="P:DNA replication"/>
    <property type="evidence" value="ECO:0007669"/>
    <property type="project" value="UniProtKB-UniRule"/>
</dbReference>
<dbReference type="GO" id="GO:0000731">
    <property type="term" value="P:DNA synthesis involved in DNA repair"/>
    <property type="evidence" value="ECO:0007669"/>
    <property type="project" value="TreeGrafter"/>
</dbReference>
<dbReference type="GO" id="GO:0006302">
    <property type="term" value="P:double-strand break repair"/>
    <property type="evidence" value="ECO:0007669"/>
    <property type="project" value="TreeGrafter"/>
</dbReference>
<dbReference type="GO" id="GO:0009432">
    <property type="term" value="P:SOS response"/>
    <property type="evidence" value="ECO:0007669"/>
    <property type="project" value="UniProtKB-UniRule"/>
</dbReference>
<dbReference type="Gene3D" id="3.40.50.300">
    <property type="entry name" value="P-loop containing nucleotide triphosphate hydrolases"/>
    <property type="match status" value="1"/>
</dbReference>
<dbReference type="Gene3D" id="1.20.1050.90">
    <property type="entry name" value="RecF/RecN/SMC, N-terminal domain"/>
    <property type="match status" value="1"/>
</dbReference>
<dbReference type="HAMAP" id="MF_00365">
    <property type="entry name" value="RecF"/>
    <property type="match status" value="1"/>
</dbReference>
<dbReference type="InterPro" id="IPR001238">
    <property type="entry name" value="DNA-binding_RecF"/>
</dbReference>
<dbReference type="InterPro" id="IPR018078">
    <property type="entry name" value="DNA-binding_RecF_CS"/>
</dbReference>
<dbReference type="InterPro" id="IPR027417">
    <property type="entry name" value="P-loop_NTPase"/>
</dbReference>
<dbReference type="InterPro" id="IPR003395">
    <property type="entry name" value="RecF/RecN/SMC_N"/>
</dbReference>
<dbReference type="InterPro" id="IPR042174">
    <property type="entry name" value="RecF_2"/>
</dbReference>
<dbReference type="NCBIfam" id="TIGR00611">
    <property type="entry name" value="recf"/>
    <property type="match status" value="1"/>
</dbReference>
<dbReference type="PANTHER" id="PTHR32182">
    <property type="entry name" value="DNA REPLICATION AND REPAIR PROTEIN RECF"/>
    <property type="match status" value="1"/>
</dbReference>
<dbReference type="PANTHER" id="PTHR32182:SF0">
    <property type="entry name" value="DNA REPLICATION AND REPAIR PROTEIN RECF"/>
    <property type="match status" value="1"/>
</dbReference>
<dbReference type="Pfam" id="PF02463">
    <property type="entry name" value="SMC_N"/>
    <property type="match status" value="1"/>
</dbReference>
<dbReference type="SUPFAM" id="SSF52540">
    <property type="entry name" value="P-loop containing nucleoside triphosphate hydrolases"/>
    <property type="match status" value="1"/>
</dbReference>
<dbReference type="PROSITE" id="PS00617">
    <property type="entry name" value="RECF_1"/>
    <property type="match status" value="1"/>
</dbReference>
<dbReference type="PROSITE" id="PS00618">
    <property type="entry name" value="RECF_2"/>
    <property type="match status" value="1"/>
</dbReference>
<gene>
    <name evidence="1" type="primary">recF</name>
    <name type="ordered locus">Ssed_0008</name>
</gene>
<protein>
    <recommendedName>
        <fullName evidence="1">DNA replication and repair protein RecF</fullName>
    </recommendedName>
</protein>
<organism>
    <name type="scientific">Shewanella sediminis (strain HAW-EB3)</name>
    <dbReference type="NCBI Taxonomy" id="425104"/>
    <lineage>
        <taxon>Bacteria</taxon>
        <taxon>Pseudomonadati</taxon>
        <taxon>Pseudomonadota</taxon>
        <taxon>Gammaproteobacteria</taxon>
        <taxon>Alteromonadales</taxon>
        <taxon>Shewanellaceae</taxon>
        <taxon>Shewanella</taxon>
    </lineage>
</organism>
<comment type="function">
    <text evidence="1">The RecF protein is involved in DNA metabolism; it is required for DNA replication and normal SOS inducibility. RecF binds preferentially to single-stranded, linear DNA. It also seems to bind ATP.</text>
</comment>
<comment type="subcellular location">
    <subcellularLocation>
        <location evidence="1">Cytoplasm</location>
    </subcellularLocation>
</comment>
<comment type="similarity">
    <text evidence="1">Belongs to the RecF family.</text>
</comment>
<accession>A8FP48</accession>
<keyword id="KW-0067">ATP-binding</keyword>
<keyword id="KW-0963">Cytoplasm</keyword>
<keyword id="KW-0227">DNA damage</keyword>
<keyword id="KW-0234">DNA repair</keyword>
<keyword id="KW-0235">DNA replication</keyword>
<keyword id="KW-0238">DNA-binding</keyword>
<keyword id="KW-0547">Nucleotide-binding</keyword>
<keyword id="KW-1185">Reference proteome</keyword>
<keyword id="KW-0742">SOS response</keyword>
<sequence>MSLTRLHIETFRNITSAQLLPGEGINLIYGHNGSGKTSILEAIYFLGMGRSFRSHLSQRVIQHSDDKLTLFANLNVLDKESKIGLRRFRSGETEVKIDGDKVKRLSTLAESLPIQVITPESFALLFEGPKSRRQFIDWGAFHCDKSFHSAWVNVKRILKQRNQLLKNETSYSQIQFWDKELVRYSEVVTDIRTRYVNSLNEQLKGIIGEFLPLVDVKVSFTRGWDSKTDYAQLLEMQYPRDLASGNTGSGPHKADLRLRVGTLPVQDALSRGQLKLLVCALRIAQGKLLKQQIDKNSIYLVDDLPAELDAKHRQLLLQQLIDTGAQVFVTAIEPAAILDSLITPPSKTFHVEHGRVTVIE</sequence>
<feature type="chain" id="PRO_1000079607" description="DNA replication and repair protein RecF">
    <location>
        <begin position="1"/>
        <end position="360"/>
    </location>
</feature>
<feature type="binding site" evidence="1">
    <location>
        <begin position="30"/>
        <end position="37"/>
    </location>
    <ligand>
        <name>ATP</name>
        <dbReference type="ChEBI" id="CHEBI:30616"/>
    </ligand>
</feature>